<dbReference type="EMBL" id="CP001146">
    <property type="protein sequence ID" value="ACI18605.1"/>
    <property type="molecule type" value="Genomic_DNA"/>
</dbReference>
<dbReference type="RefSeq" id="WP_012547237.1">
    <property type="nucleotide sequence ID" value="NC_011297.1"/>
</dbReference>
<dbReference type="SMR" id="B5YB52"/>
<dbReference type="STRING" id="309799.DICTH_1766"/>
<dbReference type="PaxDb" id="309799-DICTH_1766"/>
<dbReference type="KEGG" id="dth:DICTH_1766"/>
<dbReference type="eggNOG" id="COG1058">
    <property type="taxonomic scope" value="Bacteria"/>
</dbReference>
<dbReference type="eggNOG" id="COG1546">
    <property type="taxonomic scope" value="Bacteria"/>
</dbReference>
<dbReference type="HOGENOM" id="CLU_030805_9_3_0"/>
<dbReference type="OrthoDB" id="9801454at2"/>
<dbReference type="Proteomes" id="UP000001733">
    <property type="component" value="Chromosome"/>
</dbReference>
<dbReference type="CDD" id="cd00885">
    <property type="entry name" value="cinA"/>
    <property type="match status" value="1"/>
</dbReference>
<dbReference type="Gene3D" id="3.30.70.2860">
    <property type="match status" value="1"/>
</dbReference>
<dbReference type="Gene3D" id="3.90.950.20">
    <property type="entry name" value="CinA-like"/>
    <property type="match status" value="1"/>
</dbReference>
<dbReference type="Gene3D" id="3.40.980.10">
    <property type="entry name" value="MoaB/Mog-like domain"/>
    <property type="match status" value="1"/>
</dbReference>
<dbReference type="HAMAP" id="MF_00226_B">
    <property type="entry name" value="CinA_B"/>
    <property type="match status" value="1"/>
</dbReference>
<dbReference type="InterPro" id="IPR050101">
    <property type="entry name" value="CinA"/>
</dbReference>
<dbReference type="InterPro" id="IPR036653">
    <property type="entry name" value="CinA-like_C"/>
</dbReference>
<dbReference type="InterPro" id="IPR008136">
    <property type="entry name" value="CinA_C"/>
</dbReference>
<dbReference type="InterPro" id="IPR041424">
    <property type="entry name" value="CinA_KH"/>
</dbReference>
<dbReference type="InterPro" id="IPR008135">
    <property type="entry name" value="Competence-induced_CinA"/>
</dbReference>
<dbReference type="InterPro" id="IPR036425">
    <property type="entry name" value="MoaB/Mog-like_dom_sf"/>
</dbReference>
<dbReference type="InterPro" id="IPR001453">
    <property type="entry name" value="MoaB/Mog_dom"/>
</dbReference>
<dbReference type="NCBIfam" id="TIGR00200">
    <property type="entry name" value="cinA_nterm"/>
    <property type="match status" value="1"/>
</dbReference>
<dbReference type="NCBIfam" id="TIGR00177">
    <property type="entry name" value="molyb_syn"/>
    <property type="match status" value="1"/>
</dbReference>
<dbReference type="NCBIfam" id="TIGR00199">
    <property type="entry name" value="PncC_domain"/>
    <property type="match status" value="1"/>
</dbReference>
<dbReference type="NCBIfam" id="NF001813">
    <property type="entry name" value="PRK00549.1"/>
    <property type="match status" value="1"/>
</dbReference>
<dbReference type="PANTHER" id="PTHR13939">
    <property type="entry name" value="NICOTINAMIDE-NUCLEOTIDE AMIDOHYDROLASE PNCC"/>
    <property type="match status" value="1"/>
</dbReference>
<dbReference type="PANTHER" id="PTHR13939:SF0">
    <property type="entry name" value="NMN AMIDOHYDROLASE-LIKE PROTEIN YFAY"/>
    <property type="match status" value="1"/>
</dbReference>
<dbReference type="Pfam" id="PF02464">
    <property type="entry name" value="CinA"/>
    <property type="match status" value="1"/>
</dbReference>
<dbReference type="Pfam" id="PF18146">
    <property type="entry name" value="CinA_KH"/>
    <property type="match status" value="1"/>
</dbReference>
<dbReference type="Pfam" id="PF00994">
    <property type="entry name" value="MoCF_biosynth"/>
    <property type="match status" value="1"/>
</dbReference>
<dbReference type="PIRSF" id="PIRSF006728">
    <property type="entry name" value="CinA"/>
    <property type="match status" value="1"/>
</dbReference>
<dbReference type="SMART" id="SM00852">
    <property type="entry name" value="MoCF_biosynth"/>
    <property type="match status" value="1"/>
</dbReference>
<dbReference type="SUPFAM" id="SSF142433">
    <property type="entry name" value="CinA-like"/>
    <property type="match status" value="1"/>
</dbReference>
<dbReference type="SUPFAM" id="SSF53218">
    <property type="entry name" value="Molybdenum cofactor biosynthesis proteins"/>
    <property type="match status" value="1"/>
</dbReference>
<accession>B5YB52</accession>
<gene>
    <name type="ordered locus">DICTH_1766</name>
</gene>
<name>CINAL_DICT6</name>
<reference key="1">
    <citation type="journal article" date="2014" name="Genome Announc.">
        <title>Complete Genome Sequence of the Extreme Thermophile Dictyoglomus thermophilum H-6-12.</title>
        <authorList>
            <person name="Coil D.A."/>
            <person name="Badger J.H."/>
            <person name="Forberger H.C."/>
            <person name="Riggs F."/>
            <person name="Madupu R."/>
            <person name="Fedorova N."/>
            <person name="Ward N."/>
            <person name="Robb F.T."/>
            <person name="Eisen J.A."/>
        </authorList>
    </citation>
    <scope>NUCLEOTIDE SEQUENCE [LARGE SCALE GENOMIC DNA]</scope>
    <source>
        <strain>ATCC 35947 / DSM 3960 / H-6-12</strain>
    </source>
</reference>
<comment type="similarity">
    <text evidence="1">Belongs to the CinA family.</text>
</comment>
<feature type="chain" id="PRO_1000100316" description="CinA-like protein">
    <location>
        <begin position="1"/>
        <end position="411"/>
    </location>
</feature>
<evidence type="ECO:0000255" key="1">
    <source>
        <dbReference type="HAMAP-Rule" id="MF_00226"/>
    </source>
</evidence>
<proteinExistence type="inferred from homology"/>
<organism>
    <name type="scientific">Dictyoglomus thermophilum (strain ATCC 35947 / DSM 3960 / H-6-12)</name>
    <dbReference type="NCBI Taxonomy" id="309799"/>
    <lineage>
        <taxon>Bacteria</taxon>
        <taxon>Pseudomonadati</taxon>
        <taxon>Dictyoglomota</taxon>
        <taxon>Dictyoglomia</taxon>
        <taxon>Dictyoglomales</taxon>
        <taxon>Dictyoglomaceae</taxon>
        <taxon>Dictyoglomus</taxon>
    </lineage>
</organism>
<protein>
    <recommendedName>
        <fullName evidence="1">CinA-like protein</fullName>
    </recommendedName>
</protein>
<sequence>MRCEILSVGTELLLGDILNTNSQYLSRRLAELGIPVYFHTTVGDNPERLKKALEIAFSRSDMVIATGGLGPTQDDLTKEVSAEFFNKKLVLHEESLKRIKEFFEKRGLALTEGNIKQAYIVEGSRVIPNDWGTAPGIILEEGNKILILLPGPPKEMIPMFETYVVPYLLSFSSGIIHSRVLRVCGIGESFMEEKVKDLIKTQTNPTIAPYAKEGEAILRVTARADTKEEAEKMIERVVEEIRKRLGDYIYGEGETSLEEVVVDLLSKKSLTISIAESCTGGLISARLVNVPGVSKFFKGSLVAYDNEIKIRELNVPREIIEKYGAVSSQCAMKMAEGVAQKMGTDIGLSATGIAGPEGGTPEKPVGLVYIGLYIRGELSYKELRLSGDRNRIRLYTTINALDFLRRGLLNL</sequence>